<keyword id="KW-1003">Cell membrane</keyword>
<keyword id="KW-1017">Isopeptide bond</keyword>
<keyword id="KW-0464">Manganese</keyword>
<keyword id="KW-0472">Membrane</keyword>
<keyword id="KW-0592">Phosphate transport</keyword>
<keyword id="KW-0597">Phosphoprotein</keyword>
<keyword id="KW-1185">Reference proteome</keyword>
<keyword id="KW-0812">Transmembrane</keyword>
<keyword id="KW-1133">Transmembrane helix</keyword>
<keyword id="KW-0813">Transport</keyword>
<keyword id="KW-0832">Ubl conjugation</keyword>
<keyword id="KW-0926">Vacuole</keyword>
<sequence length="587" mass="64382">MSSVNKDTIHVAERSLHKEHLTEGGNMAFHNHLNDFAHIEDPLERRRLALESIDDEGFGWQQVKTISIAGVGFLTDSYDIFAINLGITMMSYVYWHGSMPGPSQTLLKVSTSVGTVIGQFGFGTLADIVGRKRIYGMELIIMIVCTILQTTVAHSPAINFVAVLTFYRIVMGIGIGGDYPLSSIITSEFATTKWRGAIMGAVFANQAWGQISGGIIALILVAAYKGELEYANSGAECDARCQKACDQMWRILIGLGTVLGLACLYFRLTIPESPRYQLDVNAKLELAAAAQEQDGEKKIHDTSDEDMAINGLERASTAVESLDNHPPKASFKDFCRHFGQWKYGKILLGTAGSWFTLDVAFYGLSLNSAVILQTIGYAGSKNVYKKLYDTAVGNLILICAGSLPGYWVSVFTVDIIGRKPIQLAGFIILTALFCVIGFAYHKLGDHGLLALYVICQFFQNFGPNTTTFIVPGECFPTRYRSTAHGISAASGKVGAIIAQTALGTLIDHNCARDGKPTNCWLPHVMEIFALFMLLGIFTTLLIPETKRKTLEEINELYHDEIDPATLNFRNKNNDIESSSPSQLQHEA</sequence>
<proteinExistence type="evidence at protein level"/>
<organism>
    <name type="scientific">Saccharomyces cerevisiae (strain ATCC 204508 / S288c)</name>
    <name type="common">Baker's yeast</name>
    <dbReference type="NCBI Taxonomy" id="559292"/>
    <lineage>
        <taxon>Eukaryota</taxon>
        <taxon>Fungi</taxon>
        <taxon>Dikarya</taxon>
        <taxon>Ascomycota</taxon>
        <taxon>Saccharomycotina</taxon>
        <taxon>Saccharomycetes</taxon>
        <taxon>Saccharomycetales</taxon>
        <taxon>Saccharomycetaceae</taxon>
        <taxon>Saccharomyces</taxon>
    </lineage>
</organism>
<reference key="1">
    <citation type="journal article" date="1991" name="Mol. Cell. Biol.">
        <title>The PHO84 gene of Saccharomyces cerevisiae encodes an inorganic phosphate transporter.</title>
        <authorList>
            <person name="Bun-Ya M."/>
            <person name="Nishimura M."/>
            <person name="Harashima S."/>
            <person name="Oshima Y."/>
        </authorList>
    </citation>
    <scope>NUCLEOTIDE SEQUENCE [GENOMIC DNA]</scope>
    <scope>FUNCTION</scope>
    <scope>TRANSPORTER ACTIVITY</scope>
    <scope>SUBCELLULAR LOCATION</scope>
    <scope>INDUCTION</scope>
    <scope>DISRUPTION PHENOTYPE</scope>
</reference>
<reference key="2">
    <citation type="journal article" date="1997" name="Nature">
        <title>The nucleotide sequence of Saccharomyces cerevisiae chromosome XIII.</title>
        <authorList>
            <person name="Bowman S."/>
            <person name="Churcher C.M."/>
            <person name="Badcock K."/>
            <person name="Brown D."/>
            <person name="Chillingworth T."/>
            <person name="Connor R."/>
            <person name="Dedman K."/>
            <person name="Devlin K."/>
            <person name="Gentles S."/>
            <person name="Hamlin N."/>
            <person name="Hunt S."/>
            <person name="Jagels K."/>
            <person name="Lye G."/>
            <person name="Moule S."/>
            <person name="Odell C."/>
            <person name="Pearson D."/>
            <person name="Rajandream M.A."/>
            <person name="Rice P."/>
            <person name="Skelton J."/>
            <person name="Walsh S.V."/>
            <person name="Whitehead S."/>
            <person name="Barrell B.G."/>
        </authorList>
    </citation>
    <scope>NUCLEOTIDE SEQUENCE [LARGE SCALE GENOMIC DNA]</scope>
    <source>
        <strain>ATCC 204508 / S288c</strain>
    </source>
</reference>
<reference key="3">
    <citation type="journal article" date="2014" name="G3 (Bethesda)">
        <title>The reference genome sequence of Saccharomyces cerevisiae: Then and now.</title>
        <authorList>
            <person name="Engel S.R."/>
            <person name="Dietrich F.S."/>
            <person name="Fisk D.G."/>
            <person name="Binkley G."/>
            <person name="Balakrishnan R."/>
            <person name="Costanzo M.C."/>
            <person name="Dwight S.S."/>
            <person name="Hitz B.C."/>
            <person name="Karra K."/>
            <person name="Nash R.S."/>
            <person name="Weng S."/>
            <person name="Wong E.D."/>
            <person name="Lloyd P."/>
            <person name="Skrzypek M.S."/>
            <person name="Miyasato S.R."/>
            <person name="Simison M."/>
            <person name="Cherry J.M."/>
        </authorList>
    </citation>
    <scope>GENOME REANNOTATION</scope>
    <source>
        <strain>ATCC 204508 / S288c</strain>
    </source>
</reference>
<reference key="4">
    <citation type="journal article" date="1995" name="Eur. J. Biochem.">
        <title>Expression and purification of the high-affinity phosphate transporter of Saccharomyces cerevisiae.</title>
        <authorList>
            <person name="Berhe A."/>
            <person name="Fristedt U."/>
            <person name="Persson B.L."/>
        </authorList>
    </citation>
    <scope>FUNCTION</scope>
    <scope>TRANSPORTER ACTIVITY</scope>
    <scope>ACTIVITY REGULATION</scope>
    <scope>BIOPHYSICOCHEMICAL PROPERTIES</scope>
</reference>
<reference key="5">
    <citation type="journal article" date="1999" name="FEBS Lett.">
        <title>Characterization of purified and unidirectionally reconstituted Pho84 phosphate permease of Saccharomyces cerevisiae.</title>
        <authorList>
            <person name="Fristedt U."/>
            <person name="Weinander R."/>
            <person name="Martinsson H.S."/>
            <person name="Persson B.L."/>
        </authorList>
    </citation>
    <scope>FUNCTION</scope>
    <scope>TRANSPORTER ACTIVITY</scope>
    <scope>ACTIVITY REGULATION</scope>
    <scope>SUBCELLULAR LOCATION</scope>
    <scope>TOPOLOGY</scope>
</reference>
<reference key="6">
    <citation type="journal article" date="2001" name="Biochem. Biophys. Res. Commun.">
        <title>Properties of the cysteine-less Pho84 phosphate transporter of Saccharomyces cerevisiae.</title>
        <authorList>
            <person name="Berhe A."/>
            <person name="Zvyagilskaya R."/>
            <person name="Lagerstedt J.O."/>
            <person name="Pratt J.R."/>
            <person name="Persson B.L."/>
        </authorList>
    </citation>
    <scope>FUNCTION</scope>
    <scope>TRANSPORTER ACTIVITY</scope>
    <scope>ACTIVITY REGULATION</scope>
    <scope>MUTAGENESIS OF CYS-145; CYS-237; CYS-241; CYS-245; CYS-263; CYS-335; CYS-399; CYS-434; CYS-455; CYS-474; CYS-510 AND CYS-519</scope>
</reference>
<reference key="7">
    <citation type="journal article" date="2001" name="Genetics">
        <title>Phosphate transport and sensing in Saccharomyces cerevisiae.</title>
        <authorList>
            <person name="Wykoff D.D."/>
            <person name="O'Shea E.K."/>
        </authorList>
    </citation>
    <scope>FUNCTION</scope>
    <scope>TRANSPORTER ACTIVITY</scope>
    <scope>BIOPHYSICOCHEMICAL PROPERTIES</scope>
    <scope>SUBCELLULAR LOCATION</scope>
    <scope>DISRUPTION PHENOTYPE</scope>
</reference>
<reference key="8">
    <citation type="journal article" date="2003" name="J. Biol. Chem.">
        <title>The Saccharomyces cerevisiae high affinity phosphate transporter encoded by PHO84 also functions in manganese homeostasis.</title>
        <authorList>
            <person name="Jensen L.T."/>
            <person name="Ajua-Alemanji M."/>
            <person name="Culotta V.C."/>
        </authorList>
    </citation>
    <scope>FUNCTION</scope>
    <scope>TRANSPORTER ACTIVITY</scope>
    <scope>DISRUPTION PHENOTYPE</scope>
</reference>
<reference key="9">
    <citation type="journal article" date="2003" name="Mol. Microbiol.">
        <title>Inorganic phosphate is sensed by specific phosphate carriers and acts in concert with glucose as a nutrient signal for activation of the protein kinase A pathway in the yeast Saccharomyces cerevisiae.</title>
        <authorList>
            <person name="Giots F."/>
            <person name="Donaton M.C."/>
            <person name="Thevelein J.M."/>
        </authorList>
    </citation>
    <scope>FUNCTION</scope>
    <scope>ACTIVITY REGULATION</scope>
    <scope>DISRUPTION PHENOTYPE</scope>
</reference>
<reference key="10">
    <citation type="journal article" date="2003" name="Nature">
        <title>Global analysis of protein expression in yeast.</title>
        <authorList>
            <person name="Ghaemmaghami S."/>
            <person name="Huh W.-K."/>
            <person name="Bower K."/>
            <person name="Howson R.W."/>
            <person name="Belle A."/>
            <person name="Dephoure N."/>
            <person name="O'Shea E.K."/>
            <person name="Weissman J.S."/>
        </authorList>
    </citation>
    <scope>LEVEL OF PROTEIN EXPRESSION [LARGE SCALE ANALYSIS]</scope>
</reference>
<reference key="11">
    <citation type="journal article" date="2003" name="Nat. Biotechnol.">
        <title>A proteomics approach to understanding protein ubiquitination.</title>
        <authorList>
            <person name="Peng J."/>
            <person name="Schwartz D."/>
            <person name="Elias J.E."/>
            <person name="Thoreen C.C."/>
            <person name="Cheng D."/>
            <person name="Marsischky G."/>
            <person name="Roelofs J."/>
            <person name="Finley D."/>
            <person name="Gygi S.P."/>
        </authorList>
    </citation>
    <scope>UBIQUITINATION [LARGE SCALE ANALYSIS] AT LYS-6 AND LYS-298</scope>
    <scope>IDENTIFICATION BY MASS SPECTROMETRY</scope>
    <source>
        <strain>SUB592</strain>
    </source>
</reference>
<reference key="12">
    <citation type="journal article" date="2007" name="J. Proteome Res.">
        <title>Large-scale phosphorylation analysis of alpha-factor-arrested Saccharomyces cerevisiae.</title>
        <authorList>
            <person name="Li X."/>
            <person name="Gerber S.A."/>
            <person name="Rudner A.D."/>
            <person name="Beausoleil S.A."/>
            <person name="Haas W."/>
            <person name="Villen J."/>
            <person name="Elias J.E."/>
            <person name="Gygi S.P."/>
        </authorList>
    </citation>
    <scope>PHOSPHORYLATION [LARGE SCALE ANALYSIS] AT THR-302; SER-303; SER-316; THR-317; SER-321; SER-577; SER-579 AND SER-581</scope>
    <scope>IDENTIFICATION BY MASS SPECTROMETRY [LARGE SCALE ANALYSIS]</scope>
    <source>
        <strain>ADR376</strain>
    </source>
</reference>
<reference key="13">
    <citation type="journal article" date="2008" name="Mol. Cell. Proteomics">
        <title>A multidimensional chromatography technology for in-depth phosphoproteome analysis.</title>
        <authorList>
            <person name="Albuquerque C.P."/>
            <person name="Smolka M.B."/>
            <person name="Payne S.H."/>
            <person name="Bafna V."/>
            <person name="Eng J."/>
            <person name="Zhou H."/>
        </authorList>
    </citation>
    <scope>PHOSPHORYLATION [LARGE SCALE ANALYSIS] AT SER-321</scope>
    <scope>IDENTIFICATION BY MASS SPECTROMETRY [LARGE SCALE ANALYSIS]</scope>
</reference>
<reference key="14">
    <citation type="journal article" date="2009" name="Biochemistry">
        <title>Molecular mechanisms controlling phosphate-induced downregulation of the yeast Pho84 phosphate transporter.</title>
        <authorList>
            <person name="Lundh F."/>
            <person name="Mouillon J.M."/>
            <person name="Samyn D."/>
            <person name="Stadler K."/>
            <person name="Popova Y."/>
            <person name="Lagerstedt J.O."/>
            <person name="Thevelein J.M."/>
            <person name="Persson B.L."/>
        </authorList>
    </citation>
    <scope>FUNCTION</scope>
    <scope>SUBCELLULAR LOCATION</scope>
    <scope>INDUCTION</scope>
    <scope>PHOSPHORYLATION</scope>
    <scope>UBIQUITINATION</scope>
    <scope>MUTAGENESIS OF LYS-298 AND 304-ASP--PRO-327</scope>
</reference>
<reference key="15">
    <citation type="journal article" date="2009" name="Science">
        <title>Global analysis of Cdk1 substrate phosphorylation sites provides insights into evolution.</title>
        <authorList>
            <person name="Holt L.J."/>
            <person name="Tuch B.B."/>
            <person name="Villen J."/>
            <person name="Johnson A.D."/>
            <person name="Gygi S.P."/>
            <person name="Morgan D.O."/>
        </authorList>
    </citation>
    <scope>PHOSPHORYLATION [LARGE SCALE ANALYSIS] AT THR-302; SER-303; SER-316; THR-317; SER-321; SER-579 AND SER-581</scope>
    <scope>IDENTIFICATION BY MASS SPECTROMETRY [LARGE SCALE ANALYSIS]</scope>
</reference>
<reference key="16">
    <citation type="journal article" date="2010" name="Proc. Natl. Acad. Sci. U.S.A.">
        <title>Transport and signaling through the phosphate-binding site of the yeast Pho84 phosphate transceptor.</title>
        <authorList>
            <person name="Popova Y."/>
            <person name="Thayumanavan P."/>
            <person name="Lonati E."/>
            <person name="Agrochao M."/>
            <person name="Thevelein J.M."/>
        </authorList>
    </citation>
    <scope>FUNCTION</scope>
    <scope>TRANSPORTER ACTIVITY</scope>
    <scope>ACTIVITY REGULATION</scope>
    <scope>MUTAGENESIS OF PHE-160; ARG-168; GLY-172; GLY-174; GLY-176; VAL-392 AND VAL-408</scope>
</reference>
<reference key="17">
    <citation type="journal article" date="2012" name="Biochem. J.">
        <title>Mutational analysis of putative phosphate- and proton-binding sites in the Saccharomyces cerevisiae Pho84 phosphate:H(+) transceptor and its effect on signalling to the PKA and PHO pathways.</title>
        <authorList>
            <person name="Samyn D.R."/>
            <person name="Ruiz-Pavon L."/>
            <person name="Andersson M.R."/>
            <person name="Popova Y."/>
            <person name="Thevelein J.M."/>
            <person name="Persson B.L."/>
        </authorList>
    </citation>
    <scope>FUNCTION</scope>
    <scope>TRANSPORTER ACTIVITY</scope>
    <scope>BIOPHYSICOCHEMICAL PROPERTIES</scope>
    <scope>MUTAGENESIS OF ARG-168; ASP-178; ASP-358; GLU-473 AND LYS-492</scope>
</reference>
<reference key="18">
    <citation type="journal article" date="2012" name="Proteomics">
        <title>Sites of ubiquitin attachment in Saccharomyces cerevisiae.</title>
        <authorList>
            <person name="Starita L.M."/>
            <person name="Lo R.S."/>
            <person name="Eng J.K."/>
            <person name="von Haller P.D."/>
            <person name="Fields S."/>
        </authorList>
    </citation>
    <scope>IDENTIFICATION BY MASS SPECTROMETRY [LARGE SCALE ANALYSIS]</scope>
</reference>
<reference key="19">
    <citation type="journal article" date="2016" name="J. Biol. Chem.">
        <title>Key Residues and Phosphate Release Routes in the Saccharomyces cerevisiae Pho84 Transceptor: THE ROLE OF TYR179 IN FUNCTIONAL REGULATION.</title>
        <authorList>
            <person name="Samyn D.R."/>
            <person name="Van der Veken J."/>
            <person name="Van Zeebroeck G."/>
            <person name="Persson B.L."/>
            <person name="Karlsson B.C."/>
        </authorList>
    </citation>
    <scope>DISRUPTION PHENOTYPE</scope>
    <scope>MUTAGENESIS OF TYR-179</scope>
</reference>
<dbReference type="EMBL" id="D90346">
    <property type="protein sequence ID" value="BAA14358.1"/>
    <property type="molecule type" value="Genomic_DNA"/>
</dbReference>
<dbReference type="EMBL" id="Z49218">
    <property type="protein sequence ID" value="CAA89157.1"/>
    <property type="molecule type" value="Genomic_DNA"/>
</dbReference>
<dbReference type="EMBL" id="BK006946">
    <property type="protein sequence ID" value="DAA09776.1"/>
    <property type="molecule type" value="Genomic_DNA"/>
</dbReference>
<dbReference type="PIR" id="S54061">
    <property type="entry name" value="S54061"/>
</dbReference>
<dbReference type="RefSeq" id="NP_013583.1">
    <property type="nucleotide sequence ID" value="NM_001182486.1"/>
</dbReference>
<dbReference type="SMR" id="P25297"/>
<dbReference type="BioGRID" id="35082">
    <property type="interactions" value="239"/>
</dbReference>
<dbReference type="DIP" id="DIP-5072N"/>
<dbReference type="FunCoup" id="P25297">
    <property type="interactions" value="1121"/>
</dbReference>
<dbReference type="IntAct" id="P25297">
    <property type="interactions" value="13"/>
</dbReference>
<dbReference type="MINT" id="P25297"/>
<dbReference type="STRING" id="4932.YML123C"/>
<dbReference type="TCDB" id="2.A.1.9.1">
    <property type="family name" value="the major facilitator superfamily (mfs)"/>
</dbReference>
<dbReference type="iPTMnet" id="P25297"/>
<dbReference type="PaxDb" id="4932-YML123C"/>
<dbReference type="PeptideAtlas" id="P25297"/>
<dbReference type="TopDownProteomics" id="P25297"/>
<dbReference type="EnsemblFungi" id="YML123C_mRNA">
    <property type="protein sequence ID" value="YML123C"/>
    <property type="gene ID" value="YML123C"/>
</dbReference>
<dbReference type="GeneID" id="854916"/>
<dbReference type="KEGG" id="sce:YML123C"/>
<dbReference type="AGR" id="SGD:S000004592"/>
<dbReference type="SGD" id="S000004592">
    <property type="gene designation" value="PHO84"/>
</dbReference>
<dbReference type="VEuPathDB" id="FungiDB:YML123C"/>
<dbReference type="eggNOG" id="KOG0252">
    <property type="taxonomic scope" value="Eukaryota"/>
</dbReference>
<dbReference type="GeneTree" id="ENSGT00940000174507"/>
<dbReference type="HOGENOM" id="CLU_001265_46_14_1"/>
<dbReference type="InParanoid" id="P25297"/>
<dbReference type="OMA" id="DKMWRVV"/>
<dbReference type="OrthoDB" id="433512at2759"/>
<dbReference type="BioCyc" id="MetaCyc:G3O-32702-MONOMER"/>
<dbReference type="BioCyc" id="YEAST:G3O-32702-MONOMER"/>
<dbReference type="BRENDA" id="7.3.2.1">
    <property type="organism ID" value="984"/>
</dbReference>
<dbReference type="BioGRID-ORCS" id="854916">
    <property type="hits" value="6 hits in 10 CRISPR screens"/>
</dbReference>
<dbReference type="PRO" id="PR:P25297"/>
<dbReference type="Proteomes" id="UP000002311">
    <property type="component" value="Chromosome XIII"/>
</dbReference>
<dbReference type="RNAct" id="P25297">
    <property type="molecule type" value="protein"/>
</dbReference>
<dbReference type="GO" id="GO:0005783">
    <property type="term" value="C:endoplasmic reticulum"/>
    <property type="evidence" value="ECO:0007005"/>
    <property type="project" value="SGD"/>
</dbReference>
<dbReference type="GO" id="GO:0000324">
    <property type="term" value="C:fungal-type vacuole"/>
    <property type="evidence" value="ECO:0007005"/>
    <property type="project" value="SGD"/>
</dbReference>
<dbReference type="GO" id="GO:0005886">
    <property type="term" value="C:plasma membrane"/>
    <property type="evidence" value="ECO:0000314"/>
    <property type="project" value="SGD"/>
</dbReference>
<dbReference type="GO" id="GO:0005384">
    <property type="term" value="F:manganese ion transmembrane transporter activity"/>
    <property type="evidence" value="ECO:0000315"/>
    <property type="project" value="SGD"/>
</dbReference>
<dbReference type="GO" id="GO:0005315">
    <property type="term" value="F:phosphate transmembrane transporter activity"/>
    <property type="evidence" value="ECO:0000314"/>
    <property type="project" value="SGD"/>
</dbReference>
<dbReference type="GO" id="GO:0097079">
    <property type="term" value="F:selenite:proton symporter activity"/>
    <property type="evidence" value="ECO:0000314"/>
    <property type="project" value="SGD"/>
</dbReference>
<dbReference type="GO" id="GO:0006828">
    <property type="term" value="P:manganese ion transport"/>
    <property type="evidence" value="ECO:0000315"/>
    <property type="project" value="SGD"/>
</dbReference>
<dbReference type="GO" id="GO:0006817">
    <property type="term" value="P:phosphate ion transport"/>
    <property type="evidence" value="ECO:0000314"/>
    <property type="project" value="SGD"/>
</dbReference>
<dbReference type="GO" id="GO:0097080">
    <property type="term" value="P:plasma membrane selenite transport"/>
    <property type="evidence" value="ECO:0000315"/>
    <property type="project" value="SGD"/>
</dbReference>
<dbReference type="GO" id="GO:0006797">
    <property type="term" value="P:polyphosphate metabolic process"/>
    <property type="evidence" value="ECO:0000315"/>
    <property type="project" value="SGD"/>
</dbReference>
<dbReference type="CDD" id="cd17364">
    <property type="entry name" value="MFS_PhT"/>
    <property type="match status" value="1"/>
</dbReference>
<dbReference type="FunFam" id="1.20.1250.20:FF:000421">
    <property type="entry name" value="Inorganic phosphate transporter"/>
    <property type="match status" value="1"/>
</dbReference>
<dbReference type="FunFam" id="1.20.1250.20:FF:000519">
    <property type="entry name" value="Inorganic phosphate transporter"/>
    <property type="match status" value="1"/>
</dbReference>
<dbReference type="Gene3D" id="1.20.1250.20">
    <property type="entry name" value="MFS general substrate transporter like domains"/>
    <property type="match status" value="2"/>
</dbReference>
<dbReference type="InterPro" id="IPR020846">
    <property type="entry name" value="MFS_dom"/>
</dbReference>
<dbReference type="InterPro" id="IPR005828">
    <property type="entry name" value="MFS_sugar_transport-like"/>
</dbReference>
<dbReference type="InterPro" id="IPR036259">
    <property type="entry name" value="MFS_trans_sf"/>
</dbReference>
<dbReference type="InterPro" id="IPR004738">
    <property type="entry name" value="Phos_permease"/>
</dbReference>
<dbReference type="InterPro" id="IPR005829">
    <property type="entry name" value="Sugar_transporter_CS"/>
</dbReference>
<dbReference type="NCBIfam" id="TIGR00887">
    <property type="entry name" value="2A0109"/>
    <property type="match status" value="1"/>
</dbReference>
<dbReference type="PANTHER" id="PTHR24064">
    <property type="entry name" value="SOLUTE CARRIER FAMILY 22 MEMBER"/>
    <property type="match status" value="1"/>
</dbReference>
<dbReference type="Pfam" id="PF00083">
    <property type="entry name" value="Sugar_tr"/>
    <property type="match status" value="1"/>
</dbReference>
<dbReference type="SUPFAM" id="SSF103473">
    <property type="entry name" value="MFS general substrate transporter"/>
    <property type="match status" value="1"/>
</dbReference>
<dbReference type="PROSITE" id="PS50850">
    <property type="entry name" value="MFS"/>
    <property type="match status" value="1"/>
</dbReference>
<dbReference type="PROSITE" id="PS00216">
    <property type="entry name" value="SUGAR_TRANSPORT_1"/>
    <property type="match status" value="1"/>
</dbReference>
<dbReference type="PROSITE" id="PS00217">
    <property type="entry name" value="SUGAR_TRANSPORT_2"/>
    <property type="match status" value="1"/>
</dbReference>
<accession>P25297</accession>
<accession>D6W0G2</accession>
<comment type="function">
    <text evidence="3 4 5 6 8 10 11 12 13 15">Proton-coupled high-affinity transporter for external inorganic phosphate (PubMed:10518922, PubMed:11573939, PubMed:11779791, PubMed:19348508, PubMed:20133652, PubMed:2038328, PubMed:7851439). Acts as a transceptor, a membrane protein that in addition to its transporter activity also possesses receptor-like signaling activity; mediates activation of the protein kinase A (PKA) pathway targets during growth induction, triggered by phosphate addition to cells growth-arrested due to previous phosphate starvation (PubMed:12581367, PubMed:20133652, PubMed:22587366). Is not an essential protein, since constitutive, low affinity phosphate transporters exist in yeast (PubMed:11779791, PubMed:12581367). Can function as a low affinity metal transporter that transports manganese, zinc, cobalt and copper (PubMed:12923174). Plays a role in manganese homeostasis predominantly under manganese surplus conditions (PubMed:12923174).</text>
</comment>
<comment type="catalytic activity">
    <reaction evidence="3 4 5 11 12 13 15">
        <text>phosphate(in) + H(+)(in) = phosphate(out) + H(+)(out)</text>
        <dbReference type="Rhea" id="RHEA:29939"/>
        <dbReference type="ChEBI" id="CHEBI:15378"/>
        <dbReference type="ChEBI" id="CHEBI:43474"/>
    </reaction>
    <physiologicalReaction direction="right-to-left" evidence="16">
        <dbReference type="Rhea" id="RHEA:29941"/>
    </physiologicalReaction>
</comment>
<comment type="catalytic activity">
    <reaction evidence="8">
        <text>Mn(2+)(in) = Mn(2+)(out)</text>
        <dbReference type="Rhea" id="RHEA:28699"/>
        <dbReference type="ChEBI" id="CHEBI:29035"/>
    </reaction>
    <physiologicalReaction direction="right-to-left" evidence="16">
        <dbReference type="Rhea" id="RHEA:28701"/>
    </physiologicalReaction>
</comment>
<comment type="catalytic activity">
    <reaction evidence="8">
        <text>Zn(2+)(in) = Zn(2+)(out)</text>
        <dbReference type="Rhea" id="RHEA:29351"/>
        <dbReference type="ChEBI" id="CHEBI:29105"/>
    </reaction>
    <physiologicalReaction direction="right-to-left" evidence="16">
        <dbReference type="Rhea" id="RHEA:29353"/>
    </physiologicalReaction>
</comment>
<comment type="catalytic activity">
    <reaction evidence="8">
        <text>Cu(2+)(in) = Cu(2+)(out)</text>
        <dbReference type="Rhea" id="RHEA:28703"/>
        <dbReference type="ChEBI" id="CHEBI:29036"/>
    </reaction>
    <physiologicalReaction direction="right-to-left" evidence="16">
        <dbReference type="Rhea" id="RHEA:28705"/>
    </physiologicalReaction>
</comment>
<comment type="catalytic activity">
    <reaction evidence="8">
        <text>Co(2+)(in) = Co(2+)(out)</text>
        <dbReference type="Rhea" id="RHEA:28578"/>
        <dbReference type="ChEBI" id="CHEBI:48828"/>
    </reaction>
    <physiologicalReaction direction="right-to-left" evidence="16">
        <dbReference type="Rhea" id="RHEA:28580"/>
    </physiologicalReaction>
</comment>
<comment type="activity regulation">
    <text evidence="3 4 6 11 15">Transport activity is inhibited in the presence of the protonophore carbonylcyanide m-chlorophenylhydrazone (PubMed:10518922, PubMed:11573939, PubMed:7851439). Transport activity is inhibited by glycerol-3-phosphate (PubMed:20133652). Transport activity is inhibited by phosphonoacetic acid (PubMed:20133652). Signaling activity is stimulated by glycerol-3-phosphate which acts as a nontransported PHO84 agonist that can trigger PKA signaling (PubMed:20133652). Signaling activity is stimulated by arsenate (PubMed:12581367).</text>
</comment>
<comment type="biophysicochemical properties">
    <kinetics>
        <KM evidence="15">24 uM for phosphate</KM>
        <KM evidence="13">61.9 uM for phosphate</KM>
        <KM evidence="5">58 uM for phosphate</KM>
        <Vmax evidence="15">1.4 umol/min/mg enzyme</Vmax>
    </kinetics>
</comment>
<comment type="subunit">
    <text>May function as a monomer.</text>
</comment>
<comment type="subcellular location">
    <subcellularLocation>
        <location evidence="3 5 10 12">Cell membrane</location>
        <topology evidence="1">Multi-pass membrane protein</topology>
    </subcellularLocation>
    <subcellularLocation>
        <location evidence="5">Vacuole</location>
    </subcellularLocation>
    <text evidence="5 10">Accumulates at the plasma membrane in cells starved for phosphate (PubMed:11779791). At high external phosphate concentrations, removed from the cell membrane via endocytosis and internalized in PKA/TPK3-dependent manner (PubMed:19348508).</text>
</comment>
<comment type="induction">
    <text evidence="10 12">Down-regulated at high external phosphate concentrations (PubMed:19348508). Up-regulated under low phosphate conditions (PubMed:2038328).</text>
</comment>
<comment type="PTM">
    <text evidence="10">Phosphorylated; phosphorylation increases after phosphate addition to the growth medium.</text>
</comment>
<comment type="PTM">
    <text evidence="10">Ubiquitinated in a phosphate-dependent manner; ubiquitination may influence the trafficking of PHO84 to the cell membrane and serve as a signal for endocytosis and internalization.</text>
</comment>
<comment type="disruption phenotype">
    <text evidence="5 6 8 12 14">Genetic disruption is not lethal (PubMed:11779791, PubMed:2038328, PubMed:27875295). Largely abolished phosphate uptake capacity in phosphate-starved cells (PubMed:12581367, PubMed:27875295). Reduced phosphate uptake in high phosphate conditions (PubMed:11779791). Constitutive expression of PHO5, a repressible acid phosphatase (PubMed:11779791, PubMed:27875295). Increased resistance to manganese, zinc, cobalt and copper under metal surplus conditions (PubMed:12923174). Decreased manganese uptake (PubMed:12923174).</text>
</comment>
<comment type="miscellaneous">
    <text evidence="9">Present with 335000 molecules/cell in log phase SD medium.</text>
</comment>
<comment type="similarity">
    <text evidence="16">Belongs to the major facilitator superfamily. Phosphate:H(+) symporter (TC 2.A.1.9) family.</text>
</comment>
<protein>
    <recommendedName>
        <fullName>Inorganic phosphate transporter PHO84</fullName>
    </recommendedName>
</protein>
<feature type="chain" id="PRO_0000050477" description="Inorganic phosphate transporter PHO84">
    <location>
        <begin position="1"/>
        <end position="587"/>
    </location>
</feature>
<feature type="topological domain" description="Extracellular" evidence="3">
    <location>
        <begin position="1"/>
        <end position="67"/>
    </location>
</feature>
<feature type="transmembrane region" description="Helical; Name=1" evidence="1">
    <location>
        <begin position="68"/>
        <end position="88"/>
    </location>
</feature>
<feature type="topological domain" description="Cytoplasmic" evidence="16">
    <location>
        <begin position="89"/>
        <end position="108"/>
    </location>
</feature>
<feature type="transmembrane region" description="Helical; Name=2" evidence="1">
    <location>
        <begin position="109"/>
        <end position="129"/>
    </location>
</feature>
<feature type="topological domain" description="Extracellular" evidence="16">
    <location>
        <begin position="130"/>
        <end position="133"/>
    </location>
</feature>
<feature type="transmembrane region" description="Helical; Name=3" evidence="1">
    <location>
        <begin position="134"/>
        <end position="154"/>
    </location>
</feature>
<feature type="topological domain" description="Cytoplasmic" evidence="16">
    <location>
        <begin position="155"/>
        <end position="156"/>
    </location>
</feature>
<feature type="transmembrane region" description="Helical; Name=4" evidence="1">
    <location>
        <begin position="157"/>
        <end position="177"/>
    </location>
</feature>
<feature type="topological domain" description="Extracellular" evidence="16">
    <location>
        <begin position="178"/>
        <end position="201"/>
    </location>
</feature>
<feature type="transmembrane region" description="Helical; Name=5" evidence="1">
    <location>
        <begin position="202"/>
        <end position="222"/>
    </location>
</feature>
<feature type="topological domain" description="Cytoplasmic" evidence="16">
    <location>
        <begin position="223"/>
        <end position="250"/>
    </location>
</feature>
<feature type="transmembrane region" description="Helical; Name=6" evidence="1">
    <location>
        <begin position="251"/>
        <end position="271"/>
    </location>
</feature>
<feature type="topological domain" description="Extracellular" evidence="16">
    <location>
        <begin position="272"/>
        <end position="345"/>
    </location>
</feature>
<feature type="transmembrane region" description="Helical; Name=7" evidence="1">
    <location>
        <begin position="346"/>
        <end position="366"/>
    </location>
</feature>
<feature type="topological domain" description="Cytoplasmic" evidence="16">
    <location>
        <begin position="367"/>
        <end position="395"/>
    </location>
</feature>
<feature type="transmembrane region" description="Helical; Name=8" evidence="1">
    <location>
        <begin position="396"/>
        <end position="416"/>
    </location>
</feature>
<feature type="topological domain" description="Extracellular" evidence="16">
    <location>
        <begin position="417"/>
        <end position="419"/>
    </location>
</feature>
<feature type="transmembrane region" description="Helical; Name=9" evidence="1">
    <location>
        <begin position="420"/>
        <end position="440"/>
    </location>
</feature>
<feature type="topological domain" description="Cytoplasmic" evidence="16">
    <location>
        <begin position="441"/>
        <end position="442"/>
    </location>
</feature>
<feature type="transmembrane region" description="Helical; Name=10" evidence="1">
    <location>
        <begin position="443"/>
        <end position="463"/>
    </location>
</feature>
<feature type="topological domain" description="Extracellular" evidence="16">
    <location>
        <begin position="464"/>
        <end position="485"/>
    </location>
</feature>
<feature type="transmembrane region" description="Helical; Name=11" evidence="1">
    <location>
        <begin position="486"/>
        <end position="506"/>
    </location>
</feature>
<feature type="topological domain" description="Cytoplasmic" evidence="16">
    <location>
        <begin position="507"/>
        <end position="522"/>
    </location>
</feature>
<feature type="transmembrane region" description="Helical; Name=12" evidence="1">
    <location>
        <begin position="523"/>
        <end position="543"/>
    </location>
</feature>
<feature type="topological domain" description="Extracellular" evidence="3">
    <location>
        <begin position="544"/>
        <end position="587"/>
    </location>
</feature>
<feature type="region of interest" description="Disordered" evidence="2">
    <location>
        <begin position="568"/>
        <end position="587"/>
    </location>
</feature>
<feature type="modified residue" description="Phosphothreonine" evidence="17 19">
    <location>
        <position position="302"/>
    </location>
</feature>
<feature type="modified residue" description="Phosphoserine" evidence="17 19">
    <location>
        <position position="303"/>
    </location>
</feature>
<feature type="modified residue" description="Phosphoserine" evidence="17 19">
    <location>
        <position position="316"/>
    </location>
</feature>
<feature type="modified residue" description="Phosphothreonine" evidence="17 19">
    <location>
        <position position="317"/>
    </location>
</feature>
<feature type="modified residue" description="Phosphoserine" evidence="17 18 19">
    <location>
        <position position="321"/>
    </location>
</feature>
<feature type="modified residue" description="Phosphoserine" evidence="17">
    <location>
        <position position="577"/>
    </location>
</feature>
<feature type="modified residue" description="Phosphoserine" evidence="17 19">
    <location>
        <position position="579"/>
    </location>
</feature>
<feature type="modified residue" description="Phosphoserine" evidence="17 19">
    <location>
        <position position="581"/>
    </location>
</feature>
<feature type="cross-link" description="Glycyl lysine isopeptide (Lys-Gly) (interchain with G-Cter in ubiquitin)" evidence="7">
    <location>
        <position position="6"/>
    </location>
</feature>
<feature type="cross-link" description="Glycyl lysine isopeptide (Lys-Gly) (interchain with G-Cter in ubiquitin)" evidence="7">
    <location>
        <position position="298"/>
    </location>
</feature>
<feature type="mutagenesis site" description="No significant effect on transport activity; when associated with S-237, S-241, S-245, S-263, S-335, S-399, S-434, S-455, S-474, S-510 and S-519." evidence="4">
    <original>C</original>
    <variation>S</variation>
    <location>
        <position position="145"/>
    </location>
</feature>
<feature type="mutagenesis site" description="Reduces phosphate binding, transport and signaling activities." evidence="11">
    <original>F</original>
    <variation>C</variation>
    <location>
        <position position="160"/>
    </location>
</feature>
<feature type="mutagenesis site" description="Reduces transport activity. No significant effects on affinity for inorganic phosphate. No significant effects on growth rates." evidence="13">
    <original>R</original>
    <variation>A</variation>
    <location>
        <position position="168"/>
    </location>
</feature>
<feature type="mutagenesis site" description="Abolishes transport and signaling activities." evidence="11">
    <original>R</original>
    <variation>C</variation>
    <location>
        <position position="168"/>
    </location>
</feature>
<feature type="mutagenesis site" description="Reduces transport activity. Moderately reduces affinity for inorganic phosphate. No significant effects on growth rates." evidence="13">
    <original>R</original>
    <variation>E</variation>
    <location>
        <position position="168"/>
    </location>
</feature>
<feature type="mutagenesis site" description="Reduces transport activity. Moderately reduces affinity for inorganic phosphate. Moderately reduces growth rates under low phosphate conditions. No significant effects on growth rates under high phosphate conditions." evidence="13">
    <original>R</original>
    <variation>Q</variation>
    <location>
        <position position="168"/>
    </location>
</feature>
<feature type="mutagenesis site" description="Abolishes transport and signaling activities." evidence="11">
    <original>G</original>
    <variation>C</variation>
    <location>
        <position position="172"/>
    </location>
</feature>
<feature type="mutagenesis site" description="Abolishes transport and signaling activities." evidence="11">
    <original>G</original>
    <variation>C</variation>
    <location>
        <position position="174"/>
    </location>
</feature>
<feature type="mutagenesis site" description="Abolishes transport and signaling activities." evidence="11">
    <original>G</original>
    <variation>C</variation>
    <location>
        <position position="176"/>
    </location>
</feature>
<feature type="mutagenesis site" description="Reduces transport activity. No significant effects on affinity for inorganic phosphate. No significant effects on signaling activities. No significant effects on growth rates." evidence="13">
    <original>D</original>
    <variation>E</variation>
    <variation>N</variation>
    <location>
        <position position="178"/>
    </location>
</feature>
<feature type="mutagenesis site" description="Significantly reduces transport activity. Causes pronounced increase in secreted phosphatase activity under high phosphate conditions. Reduces growth rates under low phosphate conditions. Slightly reduces signaling activity." evidence="14">
    <original>Y</original>
    <variation>A</variation>
    <location>
        <position position="179"/>
    </location>
</feature>
<feature type="mutagenesis site" description="Abolishes transport activity. Causes pronounced increase in secreted phosphatase activity under high phosphate conditions. Reduces growth rates under low phosphate conditions. Abolishes signaling activity." evidence="14">
    <original>Y</original>
    <variation>G</variation>
    <location>
        <position position="179"/>
    </location>
</feature>
<feature type="mutagenesis site" description="No significant effects on transport activity. No significant effects on growth rates under low phosphate conditions. Does not affect patterns of secreted phosphatase activities under low and high phosphate conditions. No significant effects on signaling activity." evidence="14">
    <original>Y</original>
    <variation>S</variation>
    <variation>F</variation>
    <location>
        <position position="179"/>
    </location>
</feature>
<feature type="mutagenesis site" description="No significant effect on transport activity; when associated with S-145, S-241, S-245, S-263, S-335, S-399, S-434, S-455, S-474, S-510 and S-519." evidence="4">
    <original>C</original>
    <variation>S</variation>
    <location>
        <position position="237"/>
    </location>
</feature>
<feature type="mutagenesis site" description="No significant effect on transport activity; when associated with S-145, S-237, S-245, S-263, S-335, S-399, S-434, S-455, S-474, S-510 and S-519." evidence="4">
    <original>C</original>
    <variation>S</variation>
    <location>
        <position position="241"/>
    </location>
</feature>
<feature type="mutagenesis site" description="No significant effect on transport activity; when associated with S-145, S-237, S-241, S-263, S-335, S-399, S-434, S-455, S-474, S-510 and S-519." evidence="4">
    <original>C</original>
    <variation>S</variation>
    <location>
        <position position="245"/>
    </location>
</feature>
<feature type="mutagenesis site" description="No significant effect on transport activity; when associated with S-145, S-237, S-241, S-245, S-335, S-399, S-434, S-455, S-474, S-510 and S-519." evidence="4">
    <original>C</original>
    <variation>S</variation>
    <location>
        <position position="263"/>
    </location>
</feature>
<feature type="mutagenesis site" description="No significant effect on membrane localization under low phosphate conditions and internalization after phosphate addition. Strongly affects vacuolar sorting of the protein after internalization." evidence="10">
    <original>K</original>
    <variation>A</variation>
    <location>
        <position position="298"/>
    </location>
</feature>
<feature type="mutagenesis site" description="Increases transport activity. Has no significant effect on membrane localization under low phosphate conditions. Results in severely delayed internalization after phosphate addition." evidence="10">
    <location>
        <begin position="304"/>
        <end position="327"/>
    </location>
</feature>
<feature type="mutagenesis site" description="No significant effect on transport activity; when associated with S-145, S-237, S-241, S-245, S-263, S-399, S-434, S-455, S-474, S-510 and S-519." evidence="4">
    <original>C</original>
    <variation>S</variation>
    <location>
        <position position="335"/>
    </location>
</feature>
<feature type="mutagenesis site" description="Abolishes transport activity. Causes pronounced increase in secreted phosphatase activity under high phosphate conditions. Moderately decreases signaling activities. Significantly reduces growth rates under low phosphate conditions. No significant effects on growth rates under high phosphate conditions." evidence="13">
    <original>D</original>
    <variation>E</variation>
    <location>
        <position position="358"/>
    </location>
</feature>
<feature type="mutagenesis site" description="Significantly reduces transport activity. No significant effects on affinity for inorganic phosphate. Causes pronounced increase in secreted phosphatase activity under high phosphate conditions. No significant effects on signaling activities. Significantly reduces growth rates under low phosphate conditions. No significant effects on growth rates under high phosphate conditions." evidence="13">
    <original>D</original>
    <variation>N</variation>
    <location>
        <position position="358"/>
    </location>
</feature>
<feature type="mutagenesis site" description="Reduces transport and signaling activities." evidence="11">
    <original>V</original>
    <variation>C</variation>
    <location>
        <position position="392"/>
    </location>
</feature>
<feature type="mutagenesis site" description="No significant effect on transport activity; when associated with S-145, S-237, S-241, S-245, S-263, S-335, S-434, S-455, S-474, S-510 and S-519." evidence="4">
    <original>C</original>
    <variation>S</variation>
    <location>
        <position position="399"/>
    </location>
</feature>
<feature type="mutagenesis site" description="Reduces signaling activity and enhances transport activity." evidence="11">
    <original>V</original>
    <variation>C</variation>
    <location>
        <position position="408"/>
    </location>
</feature>
<feature type="mutagenesis site" description="No significant effect on transport activity; when associated with S-145, S-237, S-241, S-245, S-263, S-335, S-399, S-455, S-474, S-510 and S-519." evidence="4">
    <original>C</original>
    <variation>S</variation>
    <location>
        <position position="434"/>
    </location>
</feature>
<feature type="mutagenesis site" description="No significant effect on transport activity; when associated with S-145, S-237, S-241, S-245, S-263, S-335, S-399, S-434, S-474, S-510 and S-519." evidence="4">
    <original>C</original>
    <variation>S</variation>
    <location>
        <position position="455"/>
    </location>
</feature>
<feature type="mutagenesis site" description="No significant effects on transport activity. No significant effects on affinity for inorganic phosphate. No significant effects on growth rates." evidence="13">
    <original>E</original>
    <variation>K</variation>
    <location>
        <position position="473"/>
    </location>
</feature>
<feature type="mutagenesis site" description="No significant effects on transport activity. Reduces affinity for inorganic phosphate. No significant effects on growth rates." evidence="13">
    <original>E</original>
    <variation>Q</variation>
    <location>
        <position position="473"/>
    </location>
</feature>
<feature type="mutagenesis site" description="No significant effect on transport activity; when associated with S-145, S-237, S-241, S-245, S-263, S-335, S-399, S-434, S-455, S-510 and S-519." evidence="4">
    <original>C</original>
    <variation>S</variation>
    <location>
        <position position="474"/>
    </location>
</feature>
<feature type="mutagenesis site" description="No significant effects on transport activity. Reduces affinity for inorganic phosphate. No significant effects on growth rates." evidence="13">
    <original>K</original>
    <variation>A</variation>
    <variation>Q</variation>
    <location>
        <position position="492"/>
    </location>
</feature>
<feature type="mutagenesis site" description="Reduces transport activity. Reduces affinity for inorganic phosphate. Significantly reduces growth rates under low phosphate conditions. No significant effects on growth rates under high phosphate conditions." evidence="13">
    <original>K</original>
    <variation>E</variation>
    <location>
        <position position="492"/>
    </location>
</feature>
<feature type="mutagenesis site" description="No significant effect on transport activity; when associated with S-145, S-237, S-241, S-245, S-263, S-335, S-399, S-434, S-455, S-474 and S-519." evidence="4">
    <original>C</original>
    <variation>S</variation>
    <location>
        <position position="510"/>
    </location>
</feature>
<feature type="mutagenesis site" description="No significant effect on transport activity; when associated with S-145, S-237, S-241, S-245, S-263, S-335, S-399, S-434, S-455, S-474 and S-510." evidence="4">
    <original>C</original>
    <variation>S</variation>
    <location>
        <position position="519"/>
    </location>
</feature>
<feature type="sequence conflict" description="In Ref. 1." evidence="16" ref="1">
    <original>A</original>
    <variation>AHSPAINFVA</variation>
    <location>
        <position position="162"/>
    </location>
</feature>
<feature type="sequence conflict" description="In Ref. 1; BAA14358." evidence="16" ref="1">
    <original>S</original>
    <variation>Y</variation>
    <location>
        <position position="353"/>
    </location>
</feature>
<name>PHO84_YEAST</name>
<evidence type="ECO:0000255" key="1"/>
<evidence type="ECO:0000256" key="2">
    <source>
        <dbReference type="SAM" id="MobiDB-lite"/>
    </source>
</evidence>
<evidence type="ECO:0000269" key="3">
    <source>
    </source>
</evidence>
<evidence type="ECO:0000269" key="4">
    <source>
    </source>
</evidence>
<evidence type="ECO:0000269" key="5">
    <source>
    </source>
</evidence>
<evidence type="ECO:0000269" key="6">
    <source>
    </source>
</evidence>
<evidence type="ECO:0000269" key="7">
    <source>
    </source>
</evidence>
<evidence type="ECO:0000269" key="8">
    <source>
    </source>
</evidence>
<evidence type="ECO:0000269" key="9">
    <source>
    </source>
</evidence>
<evidence type="ECO:0000269" key="10">
    <source>
    </source>
</evidence>
<evidence type="ECO:0000269" key="11">
    <source>
    </source>
</evidence>
<evidence type="ECO:0000269" key="12">
    <source>
    </source>
</evidence>
<evidence type="ECO:0000269" key="13">
    <source>
    </source>
</evidence>
<evidence type="ECO:0000269" key="14">
    <source>
    </source>
</evidence>
<evidence type="ECO:0000269" key="15">
    <source>
    </source>
</evidence>
<evidence type="ECO:0000305" key="16"/>
<evidence type="ECO:0007744" key="17">
    <source>
    </source>
</evidence>
<evidence type="ECO:0007744" key="18">
    <source>
    </source>
</evidence>
<evidence type="ECO:0007744" key="19">
    <source>
    </source>
</evidence>
<gene>
    <name type="primary">PHO84</name>
    <name type="ordered locus">YML123C</name>
    <name type="ORF">YM7056.03C</name>
</gene>